<accession>Q3AC33</accession>
<sequence>MAKVCEICGKGVVYGHQISHSNIHTKRKWLPNLQRVRAVVNGTRRRITVCTTCLKSGKVQRA</sequence>
<organism>
    <name type="scientific">Carboxydothermus hydrogenoformans (strain ATCC BAA-161 / DSM 6008 / Z-2901)</name>
    <dbReference type="NCBI Taxonomy" id="246194"/>
    <lineage>
        <taxon>Bacteria</taxon>
        <taxon>Bacillati</taxon>
        <taxon>Bacillota</taxon>
        <taxon>Clostridia</taxon>
        <taxon>Thermoanaerobacterales</taxon>
        <taxon>Thermoanaerobacteraceae</taxon>
        <taxon>Carboxydothermus</taxon>
    </lineage>
</organism>
<dbReference type="EMBL" id="CP000141">
    <property type="protein sequence ID" value="ABB15177.1"/>
    <property type="molecule type" value="Genomic_DNA"/>
</dbReference>
<dbReference type="RefSeq" id="WP_011344376.1">
    <property type="nucleotide sequence ID" value="NC_007503.1"/>
</dbReference>
<dbReference type="SMR" id="Q3AC33"/>
<dbReference type="FunCoup" id="Q3AC33">
    <property type="interactions" value="192"/>
</dbReference>
<dbReference type="STRING" id="246194.CHY_1469"/>
<dbReference type="KEGG" id="chy:CHY_1469"/>
<dbReference type="eggNOG" id="COG0227">
    <property type="taxonomic scope" value="Bacteria"/>
</dbReference>
<dbReference type="HOGENOM" id="CLU_064548_7_0_9"/>
<dbReference type="InParanoid" id="Q3AC33"/>
<dbReference type="OrthoDB" id="9805609at2"/>
<dbReference type="Proteomes" id="UP000002706">
    <property type="component" value="Chromosome"/>
</dbReference>
<dbReference type="GO" id="GO:1990904">
    <property type="term" value="C:ribonucleoprotein complex"/>
    <property type="evidence" value="ECO:0007669"/>
    <property type="project" value="UniProtKB-KW"/>
</dbReference>
<dbReference type="GO" id="GO:0005840">
    <property type="term" value="C:ribosome"/>
    <property type="evidence" value="ECO:0007669"/>
    <property type="project" value="UniProtKB-KW"/>
</dbReference>
<dbReference type="GO" id="GO:0003735">
    <property type="term" value="F:structural constituent of ribosome"/>
    <property type="evidence" value="ECO:0007669"/>
    <property type="project" value="InterPro"/>
</dbReference>
<dbReference type="GO" id="GO:0006412">
    <property type="term" value="P:translation"/>
    <property type="evidence" value="ECO:0007669"/>
    <property type="project" value="UniProtKB-UniRule"/>
</dbReference>
<dbReference type="Gene3D" id="2.30.170.40">
    <property type="entry name" value="Ribosomal protein L28/L24"/>
    <property type="match status" value="1"/>
</dbReference>
<dbReference type="HAMAP" id="MF_00373">
    <property type="entry name" value="Ribosomal_bL28"/>
    <property type="match status" value="1"/>
</dbReference>
<dbReference type="InterPro" id="IPR050096">
    <property type="entry name" value="Bacterial_rp_bL28"/>
</dbReference>
<dbReference type="InterPro" id="IPR026569">
    <property type="entry name" value="Ribosomal_bL28"/>
</dbReference>
<dbReference type="InterPro" id="IPR034704">
    <property type="entry name" value="Ribosomal_bL28/bL31-like_sf"/>
</dbReference>
<dbReference type="InterPro" id="IPR001383">
    <property type="entry name" value="Ribosomal_bL28_bact-type"/>
</dbReference>
<dbReference type="InterPro" id="IPR037147">
    <property type="entry name" value="Ribosomal_bL28_sf"/>
</dbReference>
<dbReference type="NCBIfam" id="TIGR00009">
    <property type="entry name" value="L28"/>
    <property type="match status" value="1"/>
</dbReference>
<dbReference type="PANTHER" id="PTHR39080">
    <property type="entry name" value="50S RIBOSOMAL PROTEIN L28"/>
    <property type="match status" value="1"/>
</dbReference>
<dbReference type="PANTHER" id="PTHR39080:SF1">
    <property type="entry name" value="LARGE RIBOSOMAL SUBUNIT PROTEIN BL28A"/>
    <property type="match status" value="1"/>
</dbReference>
<dbReference type="Pfam" id="PF00830">
    <property type="entry name" value="Ribosomal_L28"/>
    <property type="match status" value="1"/>
</dbReference>
<dbReference type="SUPFAM" id="SSF143800">
    <property type="entry name" value="L28p-like"/>
    <property type="match status" value="1"/>
</dbReference>
<name>RL28_CARHZ</name>
<feature type="chain" id="PRO_1000007203" description="Large ribosomal subunit protein bL28">
    <location>
        <begin position="1"/>
        <end position="62"/>
    </location>
</feature>
<comment type="similarity">
    <text evidence="1">Belongs to the bacterial ribosomal protein bL28 family.</text>
</comment>
<gene>
    <name evidence="1" type="primary">rpmB</name>
    <name type="ordered locus">CHY_1469</name>
</gene>
<reference key="1">
    <citation type="journal article" date="2005" name="PLoS Genet.">
        <title>Life in hot carbon monoxide: the complete genome sequence of Carboxydothermus hydrogenoformans Z-2901.</title>
        <authorList>
            <person name="Wu M."/>
            <person name="Ren Q."/>
            <person name="Durkin A.S."/>
            <person name="Daugherty S.C."/>
            <person name="Brinkac L.M."/>
            <person name="Dodson R.J."/>
            <person name="Madupu R."/>
            <person name="Sullivan S.A."/>
            <person name="Kolonay J.F."/>
            <person name="Nelson W.C."/>
            <person name="Tallon L.J."/>
            <person name="Jones K.M."/>
            <person name="Ulrich L.E."/>
            <person name="Gonzalez J.M."/>
            <person name="Zhulin I.B."/>
            <person name="Robb F.T."/>
            <person name="Eisen J.A."/>
        </authorList>
    </citation>
    <scope>NUCLEOTIDE SEQUENCE [LARGE SCALE GENOMIC DNA]</scope>
    <source>
        <strain>ATCC BAA-161 / DSM 6008 / Z-2901</strain>
    </source>
</reference>
<evidence type="ECO:0000255" key="1">
    <source>
        <dbReference type="HAMAP-Rule" id="MF_00373"/>
    </source>
</evidence>
<evidence type="ECO:0000305" key="2"/>
<protein>
    <recommendedName>
        <fullName evidence="1">Large ribosomal subunit protein bL28</fullName>
    </recommendedName>
    <alternativeName>
        <fullName evidence="2">50S ribosomal protein L28</fullName>
    </alternativeName>
</protein>
<proteinExistence type="inferred from homology"/>
<keyword id="KW-1185">Reference proteome</keyword>
<keyword id="KW-0687">Ribonucleoprotein</keyword>
<keyword id="KW-0689">Ribosomal protein</keyword>